<protein>
    <recommendedName>
        <fullName>Thiamine pyrophosphokinase 3</fullName>
        <shortName>OsTPK3</shortName>
        <ecNumber>2.7.6.2</ecNumber>
    </recommendedName>
    <alternativeName>
        <fullName>Thiamine kinase 3</fullName>
    </alternativeName>
</protein>
<keyword id="KW-0067">ATP-binding</keyword>
<keyword id="KW-0963">Cytoplasm</keyword>
<keyword id="KW-0418">Kinase</keyword>
<keyword id="KW-0547">Nucleotide-binding</keyword>
<keyword id="KW-1185">Reference proteome</keyword>
<keyword id="KW-0808">Transferase</keyword>
<proteinExistence type="evidence at transcript level"/>
<dbReference type="EC" id="2.7.6.2"/>
<dbReference type="EMBL" id="AC137618">
    <property type="protein sequence ID" value="AAV31365.1"/>
    <property type="molecule type" value="Genomic_DNA"/>
</dbReference>
<dbReference type="EMBL" id="AP008211">
    <property type="protein sequence ID" value="BAF17251.1"/>
    <property type="molecule type" value="Genomic_DNA"/>
</dbReference>
<dbReference type="EMBL" id="AP014961">
    <property type="protein sequence ID" value="BAS93654.1"/>
    <property type="molecule type" value="Genomic_DNA"/>
</dbReference>
<dbReference type="EMBL" id="CM000142">
    <property type="protein sequence ID" value="EEE63458.1"/>
    <property type="molecule type" value="Genomic_DNA"/>
</dbReference>
<dbReference type="EMBL" id="AK108439">
    <property type="protein sequence ID" value="BAG98403.1"/>
    <property type="molecule type" value="mRNA"/>
</dbReference>
<dbReference type="RefSeq" id="XP_015637762.1">
    <property type="nucleotide sequence ID" value="XM_015782276.1"/>
</dbReference>
<dbReference type="SMR" id="Q60DX1"/>
<dbReference type="FunCoup" id="Q60DX1">
    <property type="interactions" value="1338"/>
</dbReference>
<dbReference type="STRING" id="39947.Q60DX1"/>
<dbReference type="PaxDb" id="39947-Q60DX1"/>
<dbReference type="EnsemblPlants" id="Os05t0367400-01">
    <property type="protein sequence ID" value="Os05t0367400-01"/>
    <property type="gene ID" value="Os05g0367400"/>
</dbReference>
<dbReference type="Gramene" id="Os05t0367400-01">
    <property type="protein sequence ID" value="Os05t0367400-01"/>
    <property type="gene ID" value="Os05g0367400"/>
</dbReference>
<dbReference type="KEGG" id="dosa:Os05g0367400"/>
<dbReference type="eggNOG" id="KOG3153">
    <property type="taxonomic scope" value="Eukaryota"/>
</dbReference>
<dbReference type="HOGENOM" id="CLU_044237_0_2_1"/>
<dbReference type="InParanoid" id="Q60DX1"/>
<dbReference type="OMA" id="DHIVANI"/>
<dbReference type="OrthoDB" id="25149at2759"/>
<dbReference type="UniPathway" id="UPA00060">
    <property type="reaction ID" value="UER00597"/>
</dbReference>
<dbReference type="Proteomes" id="UP000000763">
    <property type="component" value="Chromosome 5"/>
</dbReference>
<dbReference type="Proteomes" id="UP000007752">
    <property type="component" value="Chromosome 5"/>
</dbReference>
<dbReference type="Proteomes" id="UP000059680">
    <property type="component" value="Chromosome 5"/>
</dbReference>
<dbReference type="GO" id="GO:0005829">
    <property type="term" value="C:cytosol"/>
    <property type="evidence" value="ECO:0007669"/>
    <property type="project" value="UniProtKB-SubCell"/>
</dbReference>
<dbReference type="GO" id="GO:0005524">
    <property type="term" value="F:ATP binding"/>
    <property type="evidence" value="ECO:0007669"/>
    <property type="project" value="UniProtKB-KW"/>
</dbReference>
<dbReference type="GO" id="GO:0016301">
    <property type="term" value="F:kinase activity"/>
    <property type="evidence" value="ECO:0007669"/>
    <property type="project" value="UniProtKB-KW"/>
</dbReference>
<dbReference type="GO" id="GO:0030975">
    <property type="term" value="F:thiamine binding"/>
    <property type="evidence" value="ECO:0007669"/>
    <property type="project" value="InterPro"/>
</dbReference>
<dbReference type="GO" id="GO:0004788">
    <property type="term" value="F:thiamine diphosphokinase activity"/>
    <property type="evidence" value="ECO:0000318"/>
    <property type="project" value="GO_Central"/>
</dbReference>
<dbReference type="GO" id="GO:0009229">
    <property type="term" value="P:thiamine diphosphate biosynthetic process"/>
    <property type="evidence" value="ECO:0000318"/>
    <property type="project" value="GO_Central"/>
</dbReference>
<dbReference type="GO" id="GO:0006772">
    <property type="term" value="P:thiamine metabolic process"/>
    <property type="evidence" value="ECO:0007669"/>
    <property type="project" value="InterPro"/>
</dbReference>
<dbReference type="CDD" id="cd07995">
    <property type="entry name" value="TPK"/>
    <property type="match status" value="1"/>
</dbReference>
<dbReference type="FunFam" id="2.60.120.320:FF:000001">
    <property type="entry name" value="Thiamine pyrophosphokinase"/>
    <property type="match status" value="1"/>
</dbReference>
<dbReference type="FunFam" id="3.40.50.10240:FF:000001">
    <property type="entry name" value="Thiamine pyrophosphokinase"/>
    <property type="match status" value="1"/>
</dbReference>
<dbReference type="Gene3D" id="3.40.50.10240">
    <property type="entry name" value="Thiamin pyrophosphokinase, catalytic domain"/>
    <property type="match status" value="1"/>
</dbReference>
<dbReference type="Gene3D" id="2.60.120.320">
    <property type="entry name" value="Thiamin pyrophosphokinase, thiamin-binding domain"/>
    <property type="match status" value="1"/>
</dbReference>
<dbReference type="InterPro" id="IPR006282">
    <property type="entry name" value="Thi_PPkinase"/>
</dbReference>
<dbReference type="InterPro" id="IPR016966">
    <property type="entry name" value="Thiamin_pyrophosphokinase_euk"/>
</dbReference>
<dbReference type="InterPro" id="IPR007373">
    <property type="entry name" value="Thiamin_PyroPKinase_B1-bd"/>
</dbReference>
<dbReference type="InterPro" id="IPR036371">
    <property type="entry name" value="TPK_B1-bd_sf"/>
</dbReference>
<dbReference type="InterPro" id="IPR007371">
    <property type="entry name" value="TPK_catalytic"/>
</dbReference>
<dbReference type="InterPro" id="IPR036759">
    <property type="entry name" value="TPK_catalytic_sf"/>
</dbReference>
<dbReference type="NCBIfam" id="TIGR01378">
    <property type="entry name" value="thi_PPkinase"/>
    <property type="match status" value="1"/>
</dbReference>
<dbReference type="PANTHER" id="PTHR13622">
    <property type="entry name" value="THIAMIN PYROPHOSPHOKINASE"/>
    <property type="match status" value="1"/>
</dbReference>
<dbReference type="PANTHER" id="PTHR13622:SF8">
    <property type="entry name" value="THIAMIN PYROPHOSPHOKINASE 1"/>
    <property type="match status" value="1"/>
</dbReference>
<dbReference type="Pfam" id="PF04265">
    <property type="entry name" value="TPK_B1_binding"/>
    <property type="match status" value="1"/>
</dbReference>
<dbReference type="Pfam" id="PF04263">
    <property type="entry name" value="TPK_catalytic"/>
    <property type="match status" value="1"/>
</dbReference>
<dbReference type="PIRSF" id="PIRSF031057">
    <property type="entry name" value="Thiamin_pyrophosphokinase"/>
    <property type="match status" value="1"/>
</dbReference>
<dbReference type="SMART" id="SM00983">
    <property type="entry name" value="TPK_B1_binding"/>
    <property type="match status" value="1"/>
</dbReference>
<dbReference type="SUPFAM" id="SSF63999">
    <property type="entry name" value="Thiamin pyrophosphokinase, catalytic domain"/>
    <property type="match status" value="1"/>
</dbReference>
<dbReference type="SUPFAM" id="SSF63862">
    <property type="entry name" value="Thiamin pyrophosphokinase, substrate-binding domain"/>
    <property type="match status" value="1"/>
</dbReference>
<accession>Q60DX1</accession>
<accession>A0A0P0WLG7</accession>
<accession>B9FP75</accession>
<feature type="chain" id="PRO_0000423970" description="Thiamine pyrophosphokinase 3">
    <location>
        <begin position="1"/>
        <end position="267"/>
    </location>
</feature>
<feature type="sequence conflict" description="In Ref. 5; EEE63458." evidence="2" ref="5">
    <original>G</original>
    <variation>C</variation>
    <location>
        <position position="29"/>
    </location>
</feature>
<organism>
    <name type="scientific">Oryza sativa subsp. japonica</name>
    <name type="common">Rice</name>
    <dbReference type="NCBI Taxonomy" id="39947"/>
    <lineage>
        <taxon>Eukaryota</taxon>
        <taxon>Viridiplantae</taxon>
        <taxon>Streptophyta</taxon>
        <taxon>Embryophyta</taxon>
        <taxon>Tracheophyta</taxon>
        <taxon>Spermatophyta</taxon>
        <taxon>Magnoliopsida</taxon>
        <taxon>Liliopsida</taxon>
        <taxon>Poales</taxon>
        <taxon>Poaceae</taxon>
        <taxon>BOP clade</taxon>
        <taxon>Oryzoideae</taxon>
        <taxon>Oryzeae</taxon>
        <taxon>Oryzinae</taxon>
        <taxon>Oryza</taxon>
        <taxon>Oryza sativa</taxon>
    </lineage>
</organism>
<name>TPK3_ORYSJ</name>
<reference key="1">
    <citation type="journal article" date="2005" name="Mol. Genet. Genomics">
        <title>A fine physical map of the rice chromosome 5.</title>
        <authorList>
            <person name="Cheng C.-H."/>
            <person name="Chung M.C."/>
            <person name="Liu S.-M."/>
            <person name="Chen S.-K."/>
            <person name="Kao F.Y."/>
            <person name="Lin S.-J."/>
            <person name="Hsiao S.-H."/>
            <person name="Tseng I.C."/>
            <person name="Hsing Y.-I.C."/>
            <person name="Wu H.-P."/>
            <person name="Chen C.-S."/>
            <person name="Shaw J.-F."/>
            <person name="Wu J."/>
            <person name="Matsumoto T."/>
            <person name="Sasaki T."/>
            <person name="Chen H.-C."/>
            <person name="Chow T.-Y."/>
        </authorList>
    </citation>
    <scope>NUCLEOTIDE SEQUENCE [LARGE SCALE GENOMIC DNA]</scope>
    <source>
        <strain>cv. Nipponbare</strain>
    </source>
</reference>
<reference key="2">
    <citation type="journal article" date="2005" name="Nature">
        <title>The map-based sequence of the rice genome.</title>
        <authorList>
            <consortium name="International rice genome sequencing project (IRGSP)"/>
        </authorList>
    </citation>
    <scope>NUCLEOTIDE SEQUENCE [LARGE SCALE GENOMIC DNA]</scope>
    <source>
        <strain>cv. Nipponbare</strain>
    </source>
</reference>
<reference key="3">
    <citation type="journal article" date="2008" name="Nucleic Acids Res.">
        <title>The rice annotation project database (RAP-DB): 2008 update.</title>
        <authorList>
            <consortium name="The rice annotation project (RAP)"/>
        </authorList>
    </citation>
    <scope>GENOME REANNOTATION</scope>
    <source>
        <strain>cv. Nipponbare</strain>
    </source>
</reference>
<reference key="4">
    <citation type="journal article" date="2013" name="Rice">
        <title>Improvement of the Oryza sativa Nipponbare reference genome using next generation sequence and optical map data.</title>
        <authorList>
            <person name="Kawahara Y."/>
            <person name="de la Bastide M."/>
            <person name="Hamilton J.P."/>
            <person name="Kanamori H."/>
            <person name="McCombie W.R."/>
            <person name="Ouyang S."/>
            <person name="Schwartz D.C."/>
            <person name="Tanaka T."/>
            <person name="Wu J."/>
            <person name="Zhou S."/>
            <person name="Childs K.L."/>
            <person name="Davidson R.M."/>
            <person name="Lin H."/>
            <person name="Quesada-Ocampo L."/>
            <person name="Vaillancourt B."/>
            <person name="Sakai H."/>
            <person name="Lee S.S."/>
            <person name="Kim J."/>
            <person name="Numa H."/>
            <person name="Itoh T."/>
            <person name="Buell C.R."/>
            <person name="Matsumoto T."/>
        </authorList>
    </citation>
    <scope>GENOME REANNOTATION</scope>
    <source>
        <strain>cv. Nipponbare</strain>
    </source>
</reference>
<reference key="5">
    <citation type="journal article" date="2005" name="PLoS Biol.">
        <title>The genomes of Oryza sativa: a history of duplications.</title>
        <authorList>
            <person name="Yu J."/>
            <person name="Wang J."/>
            <person name="Lin W."/>
            <person name="Li S."/>
            <person name="Li H."/>
            <person name="Zhou J."/>
            <person name="Ni P."/>
            <person name="Dong W."/>
            <person name="Hu S."/>
            <person name="Zeng C."/>
            <person name="Zhang J."/>
            <person name="Zhang Y."/>
            <person name="Li R."/>
            <person name="Xu Z."/>
            <person name="Li S."/>
            <person name="Li X."/>
            <person name="Zheng H."/>
            <person name="Cong L."/>
            <person name="Lin L."/>
            <person name="Yin J."/>
            <person name="Geng J."/>
            <person name="Li G."/>
            <person name="Shi J."/>
            <person name="Liu J."/>
            <person name="Lv H."/>
            <person name="Li J."/>
            <person name="Wang J."/>
            <person name="Deng Y."/>
            <person name="Ran L."/>
            <person name="Shi X."/>
            <person name="Wang X."/>
            <person name="Wu Q."/>
            <person name="Li C."/>
            <person name="Ren X."/>
            <person name="Wang J."/>
            <person name="Wang X."/>
            <person name="Li D."/>
            <person name="Liu D."/>
            <person name="Zhang X."/>
            <person name="Ji Z."/>
            <person name="Zhao W."/>
            <person name="Sun Y."/>
            <person name="Zhang Z."/>
            <person name="Bao J."/>
            <person name="Han Y."/>
            <person name="Dong L."/>
            <person name="Ji J."/>
            <person name="Chen P."/>
            <person name="Wu S."/>
            <person name="Liu J."/>
            <person name="Xiao Y."/>
            <person name="Bu D."/>
            <person name="Tan J."/>
            <person name="Yang L."/>
            <person name="Ye C."/>
            <person name="Zhang J."/>
            <person name="Xu J."/>
            <person name="Zhou Y."/>
            <person name="Yu Y."/>
            <person name="Zhang B."/>
            <person name="Zhuang S."/>
            <person name="Wei H."/>
            <person name="Liu B."/>
            <person name="Lei M."/>
            <person name="Yu H."/>
            <person name="Li Y."/>
            <person name="Xu H."/>
            <person name="Wei S."/>
            <person name="He X."/>
            <person name="Fang L."/>
            <person name="Zhang Z."/>
            <person name="Zhang Y."/>
            <person name="Huang X."/>
            <person name="Su Z."/>
            <person name="Tong W."/>
            <person name="Li J."/>
            <person name="Tong Z."/>
            <person name="Li S."/>
            <person name="Ye J."/>
            <person name="Wang L."/>
            <person name="Fang L."/>
            <person name="Lei T."/>
            <person name="Chen C.-S."/>
            <person name="Chen H.-C."/>
            <person name="Xu Z."/>
            <person name="Li H."/>
            <person name="Huang H."/>
            <person name="Zhang F."/>
            <person name="Xu H."/>
            <person name="Li N."/>
            <person name="Zhao C."/>
            <person name="Li S."/>
            <person name="Dong L."/>
            <person name="Huang Y."/>
            <person name="Li L."/>
            <person name="Xi Y."/>
            <person name="Qi Q."/>
            <person name="Li W."/>
            <person name="Zhang B."/>
            <person name="Hu W."/>
            <person name="Zhang Y."/>
            <person name="Tian X."/>
            <person name="Jiao Y."/>
            <person name="Liang X."/>
            <person name="Jin J."/>
            <person name="Gao L."/>
            <person name="Zheng W."/>
            <person name="Hao B."/>
            <person name="Liu S.-M."/>
            <person name="Wang W."/>
            <person name="Yuan L."/>
            <person name="Cao M."/>
            <person name="McDermott J."/>
            <person name="Samudrala R."/>
            <person name="Wang J."/>
            <person name="Wong G.K.-S."/>
            <person name="Yang H."/>
        </authorList>
    </citation>
    <scope>NUCLEOTIDE SEQUENCE [LARGE SCALE GENOMIC DNA]</scope>
    <source>
        <strain>cv. Nipponbare</strain>
    </source>
</reference>
<reference key="6">
    <citation type="journal article" date="2003" name="Science">
        <title>Collection, mapping, and annotation of over 28,000 cDNA clones from japonica rice.</title>
        <authorList>
            <consortium name="The rice full-length cDNA consortium"/>
        </authorList>
    </citation>
    <scope>NUCLEOTIDE SEQUENCE [LARGE SCALE MRNA]</scope>
    <source>
        <strain>cv. Nipponbare</strain>
    </source>
</reference>
<gene>
    <name type="primary">TPK3</name>
    <name type="ordered locus">Os05g0367400</name>
    <name type="ordered locus">LOC_Os05g30454</name>
    <name type="ORF">OsJ_18271</name>
    <name type="ORF">OSJNBa0090H02.18</name>
</gene>
<evidence type="ECO:0000250" key="1"/>
<evidence type="ECO:0000305" key="2"/>
<comment type="function">
    <text evidence="1">Catalyzes the phosphorylation of thiamine to thiamine pyrophosphate (TPP). TPP is an active cofactor for enzymes involved in glycolysis and energy production. Plant leaves require high levels of TPP for photosynthesis and carbohydrate metabolism (By similarity).</text>
</comment>
<comment type="catalytic activity">
    <reaction>
        <text>thiamine + ATP = thiamine diphosphate + AMP + H(+)</text>
        <dbReference type="Rhea" id="RHEA:11576"/>
        <dbReference type="ChEBI" id="CHEBI:15378"/>
        <dbReference type="ChEBI" id="CHEBI:18385"/>
        <dbReference type="ChEBI" id="CHEBI:30616"/>
        <dbReference type="ChEBI" id="CHEBI:58937"/>
        <dbReference type="ChEBI" id="CHEBI:456215"/>
        <dbReference type="EC" id="2.7.6.2"/>
    </reaction>
</comment>
<comment type="pathway">
    <text>Cofactor biosynthesis; thiamine diphosphate biosynthesis; thiamine diphosphate from thiamine: step 1/1.</text>
</comment>
<comment type="subcellular location">
    <subcellularLocation>
        <location evidence="1">Cytoplasm</location>
        <location evidence="1">Cytosol</location>
    </subcellularLocation>
</comment>
<comment type="similarity">
    <text evidence="2">Belongs to the thiamine pyrophosphokinase family.</text>
</comment>
<sequence>MAPRPAMSHSSAFLLPSPSAAAAGADADGAAYALLVLNQRLPRFAPRLWDRAQVRVCADGGANRVFDGMPELFPGQDPDEVRRRYKPDVIKGDLDSVRPEVKEYYSNMGTQIVDESHDQDTTDLHKCVAFITENSAIPNKSNLCIFALGALGGRFDHEMGNINVLHLFPNNRIILLSDDCLIFLLPRTHTHNIHIERSIEGPHCGLIPIGAPSATTTTTGLQWNLDNTSMSFGGLISTSNIVREESTVVTITSDSDLIWTISLRHHS</sequence>